<accession>A4GBX9</accession>
<protein>
    <recommendedName>
        <fullName evidence="1">Matrix protein 1</fullName>
        <shortName evidence="1">M1</shortName>
    </recommendedName>
</protein>
<organism>
    <name type="scientific">Influenza A virus (strain A/Brazil/11/1978 H1N1)</name>
    <dbReference type="NCBI Taxonomy" id="393560"/>
    <lineage>
        <taxon>Viruses</taxon>
        <taxon>Riboviria</taxon>
        <taxon>Orthornavirae</taxon>
        <taxon>Negarnaviricota</taxon>
        <taxon>Polyploviricotina</taxon>
        <taxon>Insthoviricetes</taxon>
        <taxon>Articulavirales</taxon>
        <taxon>Orthomyxoviridae</taxon>
        <taxon>Alphainfluenzavirus</taxon>
        <taxon>Alphainfluenzavirus influenzae</taxon>
        <taxon>Influenza A virus</taxon>
    </lineage>
</organism>
<sequence length="252" mass="27849">MSLLTEVETYVLSIVPSGPLKAEIAQRLEDVFAGKNTDLEALMEWLKTRPILSPLTKGILGFVFTLTVPSERGLQRRRFVQNALNGNGDPNNMDRAVKLYRKLKREITFHGAKEIALSYSAGALASCMGLIYNRMGAVTTEAAFGLICATCEQIADSQHRSHRQMVTTTNPLIRHENRMVLASTTAKAMEQMAGSSEQAAEAMEVASQARQMVQAMRAIGTHPSSSTGLKNDLLENLQAYQKRMGVQMQRFK</sequence>
<comment type="function">
    <text evidence="1">Plays critical roles in virus replication, from virus entry and uncoating to assembly and budding of the virus particle. M1 binding to ribonucleocapsids (RNPs) in nucleus seems to inhibit viral transcription. Interaction of viral NEP with M1-RNP is thought to promote nuclear export of the complex, which is targeted to the virion assembly site at the apical plasma membrane in polarized epithelial cells. Interactions with NA and HA may bring M1, a non-raft-associated protein, into lipid rafts. Forms a continuous shell on the inner side of the lipid bilayer in virion, where it binds the RNP. During virus entry into cell, the M2 ion channel acidifies the internal virion core, inducing M1 dissociation from the RNP. M1-free RNPs are transported to the nucleus, where viral transcription and replication can take place.</text>
</comment>
<comment type="function">
    <text evidence="1">Determines the virion's shape: spherical or filamentous. Clinical isolates of influenza are characterized by the presence of significant proportion of filamentous virions, whereas after multiple passage on eggs or cell culture, virions have only spherical morphology. Filamentous virions are thought to be important to infect neighboring cells, and spherical virions more suited to spread through aerosol between hosts organisms.</text>
</comment>
<comment type="subunit">
    <text evidence="1">Homodimer and homomultimer. Interacts with NEP. Binds ribonucleocapsid by both interacting with genomic RNA and NP protein. May interact with HA and NA. Cannot bind NP without genomic RNA.</text>
</comment>
<comment type="subcellular location">
    <subcellularLocation>
        <location evidence="1">Virion membrane</location>
        <topology evidence="1">Peripheral membrane protein</topology>
        <orientation evidence="1">Cytoplasmic side</orientation>
    </subcellularLocation>
    <subcellularLocation>
        <location evidence="1">Host nucleus</location>
    </subcellularLocation>
</comment>
<comment type="alternative products">
    <event type="alternative splicing"/>
    <isoform>
        <id>A4GBX9-1</id>
        <name>M1</name>
        <sequence type="displayed"/>
    </isoform>
    <isoform>
        <id>A4GBX8-1</id>
        <name>M2</name>
        <sequence type="external"/>
    </isoform>
    <text>Only the first 9 residues are shared by the 2 isoforms.</text>
</comment>
<comment type="miscellaneous">
    <text evidence="1">Most abundant protein in virion. When expressed alone can form virus-like particles in transfected cells.</text>
</comment>
<comment type="similarity">
    <text evidence="1">Belongs to the influenza viruses Matrix protein M1 family.</text>
</comment>
<gene>
    <name evidence="1" type="primary">M</name>
</gene>
<dbReference type="EMBL" id="CY020294">
    <property type="protein sequence ID" value="ABO38066.1"/>
    <property type="molecule type" value="Viral_cRNA"/>
</dbReference>
<dbReference type="SMR" id="A4GBX9"/>
<dbReference type="Proteomes" id="UP000008025">
    <property type="component" value="Genome"/>
</dbReference>
<dbReference type="GO" id="GO:0042025">
    <property type="term" value="C:host cell nucleus"/>
    <property type="evidence" value="ECO:0007669"/>
    <property type="project" value="UniProtKB-SubCell"/>
</dbReference>
<dbReference type="GO" id="GO:0016020">
    <property type="term" value="C:membrane"/>
    <property type="evidence" value="ECO:0007669"/>
    <property type="project" value="UniProtKB-KW"/>
</dbReference>
<dbReference type="GO" id="GO:0055036">
    <property type="term" value="C:virion membrane"/>
    <property type="evidence" value="ECO:0007669"/>
    <property type="project" value="UniProtKB-SubCell"/>
</dbReference>
<dbReference type="GO" id="GO:0003723">
    <property type="term" value="F:RNA binding"/>
    <property type="evidence" value="ECO:0007669"/>
    <property type="project" value="UniProtKB-UniRule"/>
</dbReference>
<dbReference type="GO" id="GO:0039660">
    <property type="term" value="F:structural constituent of virion"/>
    <property type="evidence" value="ECO:0007669"/>
    <property type="project" value="UniProtKB-UniRule"/>
</dbReference>
<dbReference type="GO" id="GO:0046761">
    <property type="term" value="P:viral budding from plasma membrane"/>
    <property type="evidence" value="ECO:0007669"/>
    <property type="project" value="UniProtKB-UniRule"/>
</dbReference>
<dbReference type="FunFam" id="1.10.10.180:FF:000001">
    <property type="entry name" value="Matrix protein 1"/>
    <property type="match status" value="1"/>
</dbReference>
<dbReference type="FunFam" id="1.20.91.10:FF:000001">
    <property type="entry name" value="Matrix protein 1"/>
    <property type="match status" value="1"/>
</dbReference>
<dbReference type="Gene3D" id="1.10.10.180">
    <property type="match status" value="1"/>
</dbReference>
<dbReference type="Gene3D" id="1.20.91.10">
    <property type="match status" value="1"/>
</dbReference>
<dbReference type="HAMAP" id="MF_04068">
    <property type="entry name" value="INFV_M1"/>
    <property type="match status" value="1"/>
</dbReference>
<dbReference type="InterPro" id="IPR036039">
    <property type="entry name" value="Flu_matrix_M1"/>
</dbReference>
<dbReference type="InterPro" id="IPR013188">
    <property type="entry name" value="Flu_matrix_M1_C"/>
</dbReference>
<dbReference type="InterPro" id="IPR001561">
    <property type="entry name" value="Flu_matrix_M1_N"/>
</dbReference>
<dbReference type="InterPro" id="IPR015423">
    <property type="entry name" value="Flu_matrix_M1_N_sub1"/>
</dbReference>
<dbReference type="InterPro" id="IPR015799">
    <property type="entry name" value="Flu_matrix_M1_N_sub2"/>
</dbReference>
<dbReference type="InterPro" id="IPR037533">
    <property type="entry name" value="INFV_M1"/>
</dbReference>
<dbReference type="Pfam" id="PF00598">
    <property type="entry name" value="Flu_M1"/>
    <property type="match status" value="1"/>
</dbReference>
<dbReference type="Pfam" id="PF08289">
    <property type="entry name" value="Flu_M1_C"/>
    <property type="match status" value="1"/>
</dbReference>
<dbReference type="SMART" id="SM00759">
    <property type="entry name" value="Flu_M1_C"/>
    <property type="match status" value="1"/>
</dbReference>
<dbReference type="SUPFAM" id="SSF48145">
    <property type="entry name" value="Influenza virus matrix protein M1"/>
    <property type="match status" value="1"/>
</dbReference>
<keyword id="KW-0025">Alternative splicing</keyword>
<keyword id="KW-1048">Host nucleus</keyword>
<keyword id="KW-0472">Membrane</keyword>
<keyword id="KW-0694">RNA-binding</keyword>
<keyword id="KW-0468">Viral matrix protein</keyword>
<keyword id="KW-0946">Virion</keyword>
<evidence type="ECO:0000255" key="1">
    <source>
        <dbReference type="HAMAP-Rule" id="MF_04068"/>
    </source>
</evidence>
<feature type="chain" id="PRO_0000372910" description="Matrix protein 1">
    <location>
        <begin position="1"/>
        <end position="252"/>
    </location>
</feature>
<feature type="region of interest" description="Membrane-binding" evidence="1">
    <location>
        <begin position="1"/>
        <end position="164"/>
    </location>
</feature>
<feature type="region of interest" description="RNP-binding" evidence="1">
    <location>
        <begin position="165"/>
        <end position="252"/>
    </location>
</feature>
<feature type="short sequence motif" description="Nuclear localization signal" evidence="1">
    <location>
        <begin position="101"/>
        <end position="105"/>
    </location>
</feature>
<reference key="1">
    <citation type="submission" date="2007-03" db="EMBL/GenBank/DDBJ databases">
        <title>The NIAID influenza genome sequencing project.</title>
        <authorList>
            <person name="Ghedin E."/>
            <person name="Spiro D."/>
            <person name="Miller N."/>
            <person name="Zaborsky J."/>
            <person name="Feldblyum T."/>
            <person name="Subbu V."/>
            <person name="Shumway M."/>
            <person name="Sparenborg J."/>
            <person name="Groveman L."/>
            <person name="Halpin R."/>
            <person name="Sitz J."/>
            <person name="Koo H."/>
            <person name="Salzberg S.L."/>
            <person name="Webster R.G."/>
            <person name="Hoffmann E."/>
            <person name="Krauss S."/>
            <person name="Naeve C."/>
            <person name="Bao Y."/>
            <person name="Bolotov P."/>
            <person name="Dernovoy D."/>
            <person name="Kiryutin B."/>
            <person name="Lipman D.J."/>
            <person name="Tatusova T."/>
        </authorList>
    </citation>
    <scope>NUCLEOTIDE SEQUENCE [GENOMIC RNA]</scope>
</reference>
<reference key="2">
    <citation type="submission" date="2007-03" db="EMBL/GenBank/DDBJ databases">
        <authorList>
            <consortium name="The NIAID Influenza Genome Sequencing Consortium"/>
        </authorList>
    </citation>
    <scope>NUCLEOTIDE SEQUENCE [GENOMIC RNA]</scope>
</reference>
<name>M1_I77AA</name>
<organismHost>
    <name type="scientific">Aves</name>
    <dbReference type="NCBI Taxonomy" id="8782"/>
</organismHost>
<organismHost>
    <name type="scientific">Homo sapiens</name>
    <name type="common">Human</name>
    <dbReference type="NCBI Taxonomy" id="9606"/>
</organismHost>
<organismHost>
    <name type="scientific">Sus scrofa</name>
    <name type="common">Pig</name>
    <dbReference type="NCBI Taxonomy" id="9823"/>
</organismHost>
<proteinExistence type="inferred from homology"/>